<name>GSA_AZOVD</name>
<feature type="chain" id="PRO_0000382256" description="Glutamate-1-semialdehyde 2,1-aminomutase">
    <location>
        <begin position="1"/>
        <end position="429"/>
    </location>
</feature>
<feature type="modified residue" description="N6-(pyridoxal phosphate)lysine" evidence="1">
    <location>
        <position position="265"/>
    </location>
</feature>
<dbReference type="EC" id="5.4.3.8" evidence="1"/>
<dbReference type="EMBL" id="CP001157">
    <property type="protein sequence ID" value="ACO77165.1"/>
    <property type="molecule type" value="Genomic_DNA"/>
</dbReference>
<dbReference type="RefSeq" id="WP_012699590.1">
    <property type="nucleotide sequence ID" value="NC_012560.1"/>
</dbReference>
<dbReference type="SMR" id="C1DMY5"/>
<dbReference type="STRING" id="322710.Avin_09260"/>
<dbReference type="EnsemblBacteria" id="ACO77165">
    <property type="protein sequence ID" value="ACO77165"/>
    <property type="gene ID" value="Avin_09260"/>
</dbReference>
<dbReference type="GeneID" id="88184294"/>
<dbReference type="KEGG" id="avn:Avin_09260"/>
<dbReference type="eggNOG" id="COG0001">
    <property type="taxonomic scope" value="Bacteria"/>
</dbReference>
<dbReference type="HOGENOM" id="CLU_016922_1_5_6"/>
<dbReference type="OrthoDB" id="9801052at2"/>
<dbReference type="UniPathway" id="UPA00251">
    <property type="reaction ID" value="UER00317"/>
</dbReference>
<dbReference type="Proteomes" id="UP000002424">
    <property type="component" value="Chromosome"/>
</dbReference>
<dbReference type="GO" id="GO:0005737">
    <property type="term" value="C:cytoplasm"/>
    <property type="evidence" value="ECO:0007669"/>
    <property type="project" value="UniProtKB-SubCell"/>
</dbReference>
<dbReference type="GO" id="GO:0042286">
    <property type="term" value="F:glutamate-1-semialdehyde 2,1-aminomutase activity"/>
    <property type="evidence" value="ECO:0007669"/>
    <property type="project" value="UniProtKB-UniRule"/>
</dbReference>
<dbReference type="GO" id="GO:0030170">
    <property type="term" value="F:pyridoxal phosphate binding"/>
    <property type="evidence" value="ECO:0007669"/>
    <property type="project" value="InterPro"/>
</dbReference>
<dbReference type="GO" id="GO:0008483">
    <property type="term" value="F:transaminase activity"/>
    <property type="evidence" value="ECO:0007669"/>
    <property type="project" value="InterPro"/>
</dbReference>
<dbReference type="GO" id="GO:0006782">
    <property type="term" value="P:protoporphyrinogen IX biosynthetic process"/>
    <property type="evidence" value="ECO:0007669"/>
    <property type="project" value="UniProtKB-UniRule"/>
</dbReference>
<dbReference type="CDD" id="cd00610">
    <property type="entry name" value="OAT_like"/>
    <property type="match status" value="1"/>
</dbReference>
<dbReference type="FunFam" id="3.40.640.10:FF:000021">
    <property type="entry name" value="Glutamate-1-semialdehyde 2,1-aminomutase"/>
    <property type="match status" value="1"/>
</dbReference>
<dbReference type="Gene3D" id="3.90.1150.10">
    <property type="entry name" value="Aspartate Aminotransferase, domain 1"/>
    <property type="match status" value="1"/>
</dbReference>
<dbReference type="Gene3D" id="3.40.640.10">
    <property type="entry name" value="Type I PLP-dependent aspartate aminotransferase-like (Major domain)"/>
    <property type="match status" value="1"/>
</dbReference>
<dbReference type="HAMAP" id="MF_00375">
    <property type="entry name" value="HemL_aminotrans_3"/>
    <property type="match status" value="1"/>
</dbReference>
<dbReference type="InterPro" id="IPR004639">
    <property type="entry name" value="4pyrrol_synth_GluAld_NH2Trfase"/>
</dbReference>
<dbReference type="InterPro" id="IPR005814">
    <property type="entry name" value="Aminotrans_3"/>
</dbReference>
<dbReference type="InterPro" id="IPR049704">
    <property type="entry name" value="Aminotrans_3_PPA_site"/>
</dbReference>
<dbReference type="InterPro" id="IPR015424">
    <property type="entry name" value="PyrdxlP-dep_Trfase"/>
</dbReference>
<dbReference type="InterPro" id="IPR015421">
    <property type="entry name" value="PyrdxlP-dep_Trfase_major"/>
</dbReference>
<dbReference type="InterPro" id="IPR015422">
    <property type="entry name" value="PyrdxlP-dep_Trfase_small"/>
</dbReference>
<dbReference type="NCBIfam" id="TIGR00713">
    <property type="entry name" value="hemL"/>
    <property type="match status" value="1"/>
</dbReference>
<dbReference type="NCBIfam" id="NF000818">
    <property type="entry name" value="PRK00062.1"/>
    <property type="match status" value="1"/>
</dbReference>
<dbReference type="PANTHER" id="PTHR43713">
    <property type="entry name" value="GLUTAMATE-1-SEMIALDEHYDE 2,1-AMINOMUTASE"/>
    <property type="match status" value="1"/>
</dbReference>
<dbReference type="PANTHER" id="PTHR43713:SF3">
    <property type="entry name" value="GLUTAMATE-1-SEMIALDEHYDE 2,1-AMINOMUTASE 1, CHLOROPLASTIC-RELATED"/>
    <property type="match status" value="1"/>
</dbReference>
<dbReference type="Pfam" id="PF00202">
    <property type="entry name" value="Aminotran_3"/>
    <property type="match status" value="1"/>
</dbReference>
<dbReference type="SUPFAM" id="SSF53383">
    <property type="entry name" value="PLP-dependent transferases"/>
    <property type="match status" value="1"/>
</dbReference>
<dbReference type="PROSITE" id="PS00600">
    <property type="entry name" value="AA_TRANSFER_CLASS_3"/>
    <property type="match status" value="1"/>
</dbReference>
<evidence type="ECO:0000255" key="1">
    <source>
        <dbReference type="HAMAP-Rule" id="MF_00375"/>
    </source>
</evidence>
<sequence length="429" mass="45276">MSRSETLFANAQKHIPGGVNSPVRAFRGVGGTPLFFKHAEGAYVIDEDDKRYVDYVGSWGPMILGHAHPDVLEAVRRQLEHGLSYGAPTALETEMAELVCSLVPSMDMVRMVSSGTEATMSAIRLARGYTGRDSIIKFEGCYHGHSDSLLVKAGSGALTLGVPSSPGVPAAFAKHTLTLPYNDLGAVEKTLAEVGREIACIIVEPVAGNMNCVPPAPGFLEGLRAQCDQHGVVLIFDEVMTGFRVALGGAQAHYGVTPDLSTFGKIVGGGMPVGCFGGKRAIMECIAPLGPVYQAGTLSGNPLAMAAGLTTLKLIGRPGFHRELAEYTGRLLQGLQERADAAGIPFVTTQAGGMFGLYFSGADEIVTFADVMASDAERFKRFFHLMLDGGVYLAPSAFEAGFTSIVHGETELSITLEAAERAFATLAKA</sequence>
<gene>
    <name evidence="1" type="primary">hemL</name>
    <name type="ordered locus">Avin_09260</name>
</gene>
<keyword id="KW-0963">Cytoplasm</keyword>
<keyword id="KW-0413">Isomerase</keyword>
<keyword id="KW-0627">Porphyrin biosynthesis</keyword>
<keyword id="KW-0663">Pyridoxal phosphate</keyword>
<proteinExistence type="inferred from homology"/>
<organism>
    <name type="scientific">Azotobacter vinelandii (strain DJ / ATCC BAA-1303)</name>
    <dbReference type="NCBI Taxonomy" id="322710"/>
    <lineage>
        <taxon>Bacteria</taxon>
        <taxon>Pseudomonadati</taxon>
        <taxon>Pseudomonadota</taxon>
        <taxon>Gammaproteobacteria</taxon>
        <taxon>Pseudomonadales</taxon>
        <taxon>Pseudomonadaceae</taxon>
        <taxon>Azotobacter</taxon>
    </lineage>
</organism>
<comment type="catalytic activity">
    <reaction evidence="1">
        <text>(S)-4-amino-5-oxopentanoate = 5-aminolevulinate</text>
        <dbReference type="Rhea" id="RHEA:14265"/>
        <dbReference type="ChEBI" id="CHEBI:57501"/>
        <dbReference type="ChEBI" id="CHEBI:356416"/>
        <dbReference type="EC" id="5.4.3.8"/>
    </reaction>
</comment>
<comment type="cofactor">
    <cofactor evidence="1">
        <name>pyridoxal 5'-phosphate</name>
        <dbReference type="ChEBI" id="CHEBI:597326"/>
    </cofactor>
</comment>
<comment type="pathway">
    <text evidence="1">Porphyrin-containing compound metabolism; protoporphyrin-IX biosynthesis; 5-aminolevulinate from L-glutamyl-tRNA(Glu): step 2/2.</text>
</comment>
<comment type="subunit">
    <text evidence="1">Homodimer.</text>
</comment>
<comment type="subcellular location">
    <subcellularLocation>
        <location evidence="1">Cytoplasm</location>
    </subcellularLocation>
</comment>
<comment type="similarity">
    <text evidence="1">Belongs to the class-III pyridoxal-phosphate-dependent aminotransferase family. HemL subfamily.</text>
</comment>
<protein>
    <recommendedName>
        <fullName evidence="1">Glutamate-1-semialdehyde 2,1-aminomutase</fullName>
        <shortName evidence="1">GSA</shortName>
        <ecNumber evidence="1">5.4.3.8</ecNumber>
    </recommendedName>
    <alternativeName>
        <fullName evidence="1">Glutamate-1-semialdehyde aminotransferase</fullName>
        <shortName evidence="1">GSA-AT</shortName>
    </alternativeName>
</protein>
<reference key="1">
    <citation type="journal article" date="2009" name="J. Bacteriol.">
        <title>Genome sequence of Azotobacter vinelandii, an obligate aerobe specialized to support diverse anaerobic metabolic processes.</title>
        <authorList>
            <person name="Setubal J.C."/>
            <person name="Dos Santos P."/>
            <person name="Goldman B.S."/>
            <person name="Ertesvaag H."/>
            <person name="Espin G."/>
            <person name="Rubio L.M."/>
            <person name="Valla S."/>
            <person name="Almeida N.F."/>
            <person name="Balasubramanian D."/>
            <person name="Cromes L."/>
            <person name="Curatti L."/>
            <person name="Du Z."/>
            <person name="Godsy E."/>
            <person name="Goodner B."/>
            <person name="Hellner-Burris K."/>
            <person name="Hernandez J.A."/>
            <person name="Houmiel K."/>
            <person name="Imperial J."/>
            <person name="Kennedy C."/>
            <person name="Larson T.J."/>
            <person name="Latreille P."/>
            <person name="Ligon L.S."/>
            <person name="Lu J."/>
            <person name="Maerk M."/>
            <person name="Miller N.M."/>
            <person name="Norton S."/>
            <person name="O'Carroll I.P."/>
            <person name="Paulsen I."/>
            <person name="Raulfs E.C."/>
            <person name="Roemer R."/>
            <person name="Rosser J."/>
            <person name="Segura D."/>
            <person name="Slater S."/>
            <person name="Stricklin S.L."/>
            <person name="Studholme D.J."/>
            <person name="Sun J."/>
            <person name="Viana C.J."/>
            <person name="Wallin E."/>
            <person name="Wang B."/>
            <person name="Wheeler C."/>
            <person name="Zhu H."/>
            <person name="Dean D.R."/>
            <person name="Dixon R."/>
            <person name="Wood D."/>
        </authorList>
    </citation>
    <scope>NUCLEOTIDE SEQUENCE [LARGE SCALE GENOMIC DNA]</scope>
    <source>
        <strain>DJ / ATCC BAA-1303</strain>
    </source>
</reference>
<accession>C1DMY5</accession>